<dbReference type="EC" id="4.2.1.19" evidence="1"/>
<dbReference type="EMBL" id="CP000736">
    <property type="protein sequence ID" value="ABR53579.1"/>
    <property type="molecule type" value="Genomic_DNA"/>
</dbReference>
<dbReference type="SMR" id="A6U561"/>
<dbReference type="KEGG" id="sah:SaurJH1_2757"/>
<dbReference type="HOGENOM" id="CLU_044308_3_0_9"/>
<dbReference type="UniPathway" id="UPA00031">
    <property type="reaction ID" value="UER00011"/>
</dbReference>
<dbReference type="GO" id="GO:0005737">
    <property type="term" value="C:cytoplasm"/>
    <property type="evidence" value="ECO:0007669"/>
    <property type="project" value="UniProtKB-SubCell"/>
</dbReference>
<dbReference type="GO" id="GO:0004424">
    <property type="term" value="F:imidazoleglycerol-phosphate dehydratase activity"/>
    <property type="evidence" value="ECO:0007669"/>
    <property type="project" value="UniProtKB-UniRule"/>
</dbReference>
<dbReference type="GO" id="GO:0000105">
    <property type="term" value="P:L-histidine biosynthetic process"/>
    <property type="evidence" value="ECO:0007669"/>
    <property type="project" value="UniProtKB-UniRule"/>
</dbReference>
<dbReference type="CDD" id="cd07914">
    <property type="entry name" value="IGPD"/>
    <property type="match status" value="1"/>
</dbReference>
<dbReference type="FunFam" id="3.30.230.40:FF:000001">
    <property type="entry name" value="Imidazoleglycerol-phosphate dehydratase HisB"/>
    <property type="match status" value="1"/>
</dbReference>
<dbReference type="FunFam" id="3.30.230.40:FF:000003">
    <property type="entry name" value="Imidazoleglycerol-phosphate dehydratase HisB"/>
    <property type="match status" value="1"/>
</dbReference>
<dbReference type="Gene3D" id="3.30.230.40">
    <property type="entry name" value="Imidazole glycerol phosphate dehydratase, domain 1"/>
    <property type="match status" value="2"/>
</dbReference>
<dbReference type="HAMAP" id="MF_00076">
    <property type="entry name" value="HisB"/>
    <property type="match status" value="1"/>
</dbReference>
<dbReference type="InterPro" id="IPR038494">
    <property type="entry name" value="IGPD_sf"/>
</dbReference>
<dbReference type="InterPro" id="IPR000807">
    <property type="entry name" value="ImidazoleglycerolP_deHydtase"/>
</dbReference>
<dbReference type="InterPro" id="IPR020565">
    <property type="entry name" value="ImidazoleglycerP_deHydtase_CS"/>
</dbReference>
<dbReference type="InterPro" id="IPR020568">
    <property type="entry name" value="Ribosomal_Su5_D2-typ_SF"/>
</dbReference>
<dbReference type="NCBIfam" id="NF002107">
    <property type="entry name" value="PRK00951.1-2"/>
    <property type="match status" value="1"/>
</dbReference>
<dbReference type="NCBIfam" id="NF002111">
    <property type="entry name" value="PRK00951.2-1"/>
    <property type="match status" value="1"/>
</dbReference>
<dbReference type="NCBIfam" id="NF002114">
    <property type="entry name" value="PRK00951.2-4"/>
    <property type="match status" value="1"/>
</dbReference>
<dbReference type="PANTHER" id="PTHR23133:SF2">
    <property type="entry name" value="IMIDAZOLEGLYCEROL-PHOSPHATE DEHYDRATASE"/>
    <property type="match status" value="1"/>
</dbReference>
<dbReference type="PANTHER" id="PTHR23133">
    <property type="entry name" value="IMIDAZOLEGLYCEROL-PHOSPHATE DEHYDRATASE HIS7"/>
    <property type="match status" value="1"/>
</dbReference>
<dbReference type="Pfam" id="PF00475">
    <property type="entry name" value="IGPD"/>
    <property type="match status" value="1"/>
</dbReference>
<dbReference type="SUPFAM" id="SSF54211">
    <property type="entry name" value="Ribosomal protein S5 domain 2-like"/>
    <property type="match status" value="2"/>
</dbReference>
<dbReference type="PROSITE" id="PS00954">
    <property type="entry name" value="IGP_DEHYDRATASE_1"/>
    <property type="match status" value="1"/>
</dbReference>
<dbReference type="PROSITE" id="PS00955">
    <property type="entry name" value="IGP_DEHYDRATASE_2"/>
    <property type="match status" value="1"/>
</dbReference>
<protein>
    <recommendedName>
        <fullName evidence="1">Imidazoleglycerol-phosphate dehydratase</fullName>
        <shortName evidence="1">IGPD</shortName>
        <ecNumber evidence="1">4.2.1.19</ecNumber>
    </recommendedName>
</protein>
<organism>
    <name type="scientific">Staphylococcus aureus (strain JH1)</name>
    <dbReference type="NCBI Taxonomy" id="359787"/>
    <lineage>
        <taxon>Bacteria</taxon>
        <taxon>Bacillati</taxon>
        <taxon>Bacillota</taxon>
        <taxon>Bacilli</taxon>
        <taxon>Bacillales</taxon>
        <taxon>Staphylococcaceae</taxon>
        <taxon>Staphylococcus</taxon>
    </lineage>
</organism>
<gene>
    <name evidence="1" type="primary">hisB</name>
    <name type="ordered locus">SaurJH1_2757</name>
</gene>
<name>HIS7_STAA2</name>
<sequence length="192" mass="21456">MIYQKQRNTAETQLNISISDDQSPSHINTGVGFLNHMLTLFTFHSGLSLNIEAQGDIDVDDHHVTEDIGIVIGQLLLEMIKDKKHFVRYGTMYIPMDETLARVVVDISGRPYLSFNASLSKEKVGTFDTELVEEFFRAVVINARLTTHIDLIRGGNTHHEIEAIFKAFSRALGIALTATDDQRVPSSKGVIE</sequence>
<keyword id="KW-0028">Amino-acid biosynthesis</keyword>
<keyword id="KW-0963">Cytoplasm</keyword>
<keyword id="KW-0368">Histidine biosynthesis</keyword>
<keyword id="KW-0456">Lyase</keyword>
<feature type="chain" id="PRO_1000075256" description="Imidazoleglycerol-phosphate dehydratase">
    <location>
        <begin position="1"/>
        <end position="192"/>
    </location>
</feature>
<evidence type="ECO:0000255" key="1">
    <source>
        <dbReference type="HAMAP-Rule" id="MF_00076"/>
    </source>
</evidence>
<comment type="catalytic activity">
    <reaction evidence="1">
        <text>D-erythro-1-(imidazol-4-yl)glycerol 3-phosphate = 3-(imidazol-4-yl)-2-oxopropyl phosphate + H2O</text>
        <dbReference type="Rhea" id="RHEA:11040"/>
        <dbReference type="ChEBI" id="CHEBI:15377"/>
        <dbReference type="ChEBI" id="CHEBI:57766"/>
        <dbReference type="ChEBI" id="CHEBI:58278"/>
        <dbReference type="EC" id="4.2.1.19"/>
    </reaction>
</comment>
<comment type="pathway">
    <text evidence="1">Amino-acid biosynthesis; L-histidine biosynthesis; L-histidine from 5-phospho-alpha-D-ribose 1-diphosphate: step 6/9.</text>
</comment>
<comment type="subcellular location">
    <subcellularLocation>
        <location evidence="1">Cytoplasm</location>
    </subcellularLocation>
</comment>
<comment type="similarity">
    <text evidence="1">Belongs to the imidazoleglycerol-phosphate dehydratase family.</text>
</comment>
<accession>A6U561</accession>
<proteinExistence type="inferred from homology"/>
<reference key="1">
    <citation type="submission" date="2007-06" db="EMBL/GenBank/DDBJ databases">
        <title>Complete sequence of chromosome of Staphylococcus aureus subsp. aureus JH1.</title>
        <authorList>
            <consortium name="US DOE Joint Genome Institute"/>
            <person name="Copeland A."/>
            <person name="Lucas S."/>
            <person name="Lapidus A."/>
            <person name="Barry K."/>
            <person name="Detter J.C."/>
            <person name="Glavina del Rio T."/>
            <person name="Hammon N."/>
            <person name="Israni S."/>
            <person name="Dalin E."/>
            <person name="Tice H."/>
            <person name="Pitluck S."/>
            <person name="Chain P."/>
            <person name="Malfatti S."/>
            <person name="Shin M."/>
            <person name="Vergez L."/>
            <person name="Schmutz J."/>
            <person name="Larimer F."/>
            <person name="Land M."/>
            <person name="Hauser L."/>
            <person name="Kyrpides N."/>
            <person name="Ivanova N."/>
            <person name="Tomasz A."/>
            <person name="Richardson P."/>
        </authorList>
    </citation>
    <scope>NUCLEOTIDE SEQUENCE [LARGE SCALE GENOMIC DNA]</scope>
    <source>
        <strain>JH1</strain>
    </source>
</reference>